<dbReference type="EMBL" id="CP000469">
    <property type="protein sequence ID" value="ABK46453.1"/>
    <property type="molecule type" value="Genomic_DNA"/>
</dbReference>
<dbReference type="RefSeq" id="WP_011715463.1">
    <property type="nucleotide sequence ID" value="NC_008577.1"/>
</dbReference>
<dbReference type="SMR" id="A0KRN4"/>
<dbReference type="STRING" id="94122.Shewana3_0209"/>
<dbReference type="GeneID" id="94726196"/>
<dbReference type="KEGG" id="shn:Shewana3_0209"/>
<dbReference type="eggNOG" id="COG0093">
    <property type="taxonomic scope" value="Bacteria"/>
</dbReference>
<dbReference type="HOGENOM" id="CLU_095071_2_1_6"/>
<dbReference type="OrthoDB" id="9806379at2"/>
<dbReference type="Proteomes" id="UP000002589">
    <property type="component" value="Chromosome"/>
</dbReference>
<dbReference type="GO" id="GO:0022625">
    <property type="term" value="C:cytosolic large ribosomal subunit"/>
    <property type="evidence" value="ECO:0007669"/>
    <property type="project" value="TreeGrafter"/>
</dbReference>
<dbReference type="GO" id="GO:0070180">
    <property type="term" value="F:large ribosomal subunit rRNA binding"/>
    <property type="evidence" value="ECO:0007669"/>
    <property type="project" value="TreeGrafter"/>
</dbReference>
<dbReference type="GO" id="GO:0003735">
    <property type="term" value="F:structural constituent of ribosome"/>
    <property type="evidence" value="ECO:0007669"/>
    <property type="project" value="InterPro"/>
</dbReference>
<dbReference type="GO" id="GO:0006412">
    <property type="term" value="P:translation"/>
    <property type="evidence" value="ECO:0007669"/>
    <property type="project" value="UniProtKB-UniRule"/>
</dbReference>
<dbReference type="CDD" id="cd00337">
    <property type="entry name" value="Ribosomal_uL14"/>
    <property type="match status" value="1"/>
</dbReference>
<dbReference type="FunFam" id="2.40.150.20:FF:000001">
    <property type="entry name" value="50S ribosomal protein L14"/>
    <property type="match status" value="1"/>
</dbReference>
<dbReference type="Gene3D" id="2.40.150.20">
    <property type="entry name" value="Ribosomal protein L14"/>
    <property type="match status" value="1"/>
</dbReference>
<dbReference type="HAMAP" id="MF_01367">
    <property type="entry name" value="Ribosomal_uL14"/>
    <property type="match status" value="1"/>
</dbReference>
<dbReference type="InterPro" id="IPR000218">
    <property type="entry name" value="Ribosomal_uL14"/>
</dbReference>
<dbReference type="InterPro" id="IPR005745">
    <property type="entry name" value="Ribosomal_uL14_bac-type"/>
</dbReference>
<dbReference type="InterPro" id="IPR019972">
    <property type="entry name" value="Ribosomal_uL14_CS"/>
</dbReference>
<dbReference type="InterPro" id="IPR036853">
    <property type="entry name" value="Ribosomal_uL14_sf"/>
</dbReference>
<dbReference type="NCBIfam" id="TIGR01067">
    <property type="entry name" value="rplN_bact"/>
    <property type="match status" value="1"/>
</dbReference>
<dbReference type="PANTHER" id="PTHR11761">
    <property type="entry name" value="50S/60S RIBOSOMAL PROTEIN L14/L23"/>
    <property type="match status" value="1"/>
</dbReference>
<dbReference type="PANTHER" id="PTHR11761:SF3">
    <property type="entry name" value="LARGE RIBOSOMAL SUBUNIT PROTEIN UL14M"/>
    <property type="match status" value="1"/>
</dbReference>
<dbReference type="Pfam" id="PF00238">
    <property type="entry name" value="Ribosomal_L14"/>
    <property type="match status" value="1"/>
</dbReference>
<dbReference type="SMART" id="SM01374">
    <property type="entry name" value="Ribosomal_L14"/>
    <property type="match status" value="1"/>
</dbReference>
<dbReference type="SUPFAM" id="SSF50193">
    <property type="entry name" value="Ribosomal protein L14"/>
    <property type="match status" value="1"/>
</dbReference>
<dbReference type="PROSITE" id="PS00049">
    <property type="entry name" value="RIBOSOMAL_L14"/>
    <property type="match status" value="1"/>
</dbReference>
<protein>
    <recommendedName>
        <fullName evidence="1">Large ribosomal subunit protein uL14</fullName>
    </recommendedName>
    <alternativeName>
        <fullName evidence="2">50S ribosomal protein L14</fullName>
    </alternativeName>
</protein>
<accession>A0KRN4</accession>
<sequence>MIQMQSTLDVACNSGARRVQCIKVLGGSHRRYAGIGDIIKVSVKEAIPRAKAKKGDVYNAVVVRTKKGVRRPDGSVIRFDRNAAVLLNNNLQPIGTRIFGPVTRELRSEQFMKIVSLAPEVL</sequence>
<organism>
    <name type="scientific">Shewanella sp. (strain ANA-3)</name>
    <dbReference type="NCBI Taxonomy" id="94122"/>
    <lineage>
        <taxon>Bacteria</taxon>
        <taxon>Pseudomonadati</taxon>
        <taxon>Pseudomonadota</taxon>
        <taxon>Gammaproteobacteria</taxon>
        <taxon>Alteromonadales</taxon>
        <taxon>Shewanellaceae</taxon>
        <taxon>Shewanella</taxon>
    </lineage>
</organism>
<gene>
    <name evidence="1" type="primary">rplN</name>
    <name type="ordered locus">Shewana3_0209</name>
</gene>
<name>RL14_SHESA</name>
<comment type="function">
    <text evidence="1">Binds to 23S rRNA. Forms part of two intersubunit bridges in the 70S ribosome.</text>
</comment>
<comment type="subunit">
    <text evidence="1">Part of the 50S ribosomal subunit. Forms a cluster with proteins L3 and L19. In the 70S ribosome, L14 and L19 interact and together make contacts with the 16S rRNA in bridges B5 and B8.</text>
</comment>
<comment type="similarity">
    <text evidence="1">Belongs to the universal ribosomal protein uL14 family.</text>
</comment>
<evidence type="ECO:0000255" key="1">
    <source>
        <dbReference type="HAMAP-Rule" id="MF_01367"/>
    </source>
</evidence>
<evidence type="ECO:0000305" key="2"/>
<keyword id="KW-0687">Ribonucleoprotein</keyword>
<keyword id="KW-0689">Ribosomal protein</keyword>
<keyword id="KW-0694">RNA-binding</keyword>
<keyword id="KW-0699">rRNA-binding</keyword>
<reference key="1">
    <citation type="submission" date="2006-09" db="EMBL/GenBank/DDBJ databases">
        <title>Complete sequence of chromosome 1 of Shewanella sp. ANA-3.</title>
        <authorList>
            <person name="Copeland A."/>
            <person name="Lucas S."/>
            <person name="Lapidus A."/>
            <person name="Barry K."/>
            <person name="Detter J.C."/>
            <person name="Glavina del Rio T."/>
            <person name="Hammon N."/>
            <person name="Israni S."/>
            <person name="Dalin E."/>
            <person name="Tice H."/>
            <person name="Pitluck S."/>
            <person name="Chertkov O."/>
            <person name="Brettin T."/>
            <person name="Bruce D."/>
            <person name="Han C."/>
            <person name="Tapia R."/>
            <person name="Gilna P."/>
            <person name="Schmutz J."/>
            <person name="Larimer F."/>
            <person name="Land M."/>
            <person name="Hauser L."/>
            <person name="Kyrpides N."/>
            <person name="Kim E."/>
            <person name="Newman D."/>
            <person name="Salticov C."/>
            <person name="Konstantinidis K."/>
            <person name="Klappenback J."/>
            <person name="Tiedje J."/>
            <person name="Richardson P."/>
        </authorList>
    </citation>
    <scope>NUCLEOTIDE SEQUENCE [LARGE SCALE GENOMIC DNA]</scope>
    <source>
        <strain>ANA-3</strain>
    </source>
</reference>
<proteinExistence type="inferred from homology"/>
<feature type="chain" id="PRO_1000055700" description="Large ribosomal subunit protein uL14">
    <location>
        <begin position="1"/>
        <end position="122"/>
    </location>
</feature>